<organism>
    <name type="scientific">Equine herpesvirus 1 (strain Ab4p)</name>
    <name type="common">EHV-1</name>
    <name type="synonym">Equine abortion virus</name>
    <dbReference type="NCBI Taxonomy" id="31520"/>
    <lineage>
        <taxon>Viruses</taxon>
        <taxon>Duplodnaviria</taxon>
        <taxon>Heunggongvirae</taxon>
        <taxon>Peploviricota</taxon>
        <taxon>Herviviricetes</taxon>
        <taxon>Herpesvirales</taxon>
        <taxon>Orthoherpesviridae</taxon>
        <taxon>Alphaherpesvirinae</taxon>
        <taxon>Varicellovirus</taxon>
        <taxon>Varicellovirus equidalpha1</taxon>
        <taxon>Equid alphaherpesvirus 1</taxon>
    </lineage>
</organism>
<protein>
    <recommendedName>
        <fullName evidence="1">Major DNA-binding protein</fullName>
    </recommendedName>
</protein>
<reference key="1">
    <citation type="journal article" date="1992" name="Virology">
        <title>The DNA sequence of equine herpesvirus-1.</title>
        <authorList>
            <person name="Telford E.A.R."/>
            <person name="Watson M.S."/>
            <person name="McBride K."/>
            <person name="Davison A.J."/>
        </authorList>
    </citation>
    <scope>NUCLEOTIDE SEQUENCE [LARGE SCALE GENOMIC DNA]</scope>
</reference>
<name>DNBI_EHV1B</name>
<evidence type="ECO:0000255" key="1">
    <source>
        <dbReference type="HAMAP-Rule" id="MF_04007"/>
    </source>
</evidence>
<evidence type="ECO:0000256" key="2">
    <source>
        <dbReference type="SAM" id="MobiDB-lite"/>
    </source>
</evidence>
<dbReference type="EMBL" id="AY665713">
    <property type="protein sequence ID" value="AAT67288.1"/>
    <property type="molecule type" value="Genomic_DNA"/>
</dbReference>
<dbReference type="PIR" id="E36798">
    <property type="entry name" value="DNBEC4"/>
</dbReference>
<dbReference type="SMR" id="P28932"/>
<dbReference type="KEGG" id="vg:1487543"/>
<dbReference type="Proteomes" id="UP000001189">
    <property type="component" value="Segment"/>
</dbReference>
<dbReference type="GO" id="GO:0042025">
    <property type="term" value="C:host cell nucleus"/>
    <property type="evidence" value="ECO:0007669"/>
    <property type="project" value="UniProtKB-SubCell"/>
</dbReference>
<dbReference type="GO" id="GO:0003697">
    <property type="term" value="F:single-stranded DNA binding"/>
    <property type="evidence" value="ECO:0007669"/>
    <property type="project" value="InterPro"/>
</dbReference>
<dbReference type="GO" id="GO:0008270">
    <property type="term" value="F:zinc ion binding"/>
    <property type="evidence" value="ECO:0007669"/>
    <property type="project" value="UniProtKB-KW"/>
</dbReference>
<dbReference type="GO" id="GO:0006260">
    <property type="term" value="P:DNA replication"/>
    <property type="evidence" value="ECO:0007669"/>
    <property type="project" value="UniProtKB-KW"/>
</dbReference>
<dbReference type="FunFam" id="1.20.190.40:FF:000002">
    <property type="entry name" value="Major DNA-binding protein"/>
    <property type="match status" value="1"/>
</dbReference>
<dbReference type="Gene3D" id="1.10.150.560">
    <property type="match status" value="1"/>
</dbReference>
<dbReference type="Gene3D" id="1.20.190.40">
    <property type="entry name" value="Viral ssDNA binding protein, head domain"/>
    <property type="match status" value="2"/>
</dbReference>
<dbReference type="HAMAP" id="MF_04007">
    <property type="entry name" value="HSV_DNBI"/>
    <property type="match status" value="1"/>
</dbReference>
<dbReference type="InterPro" id="IPR035989">
    <property type="entry name" value="DBP_sf"/>
</dbReference>
<dbReference type="InterPro" id="IPR043031">
    <property type="entry name" value="Viral_ssDBP_head"/>
</dbReference>
<dbReference type="InterPro" id="IPR000635">
    <property type="entry name" value="Viral_ssDNA-bd"/>
</dbReference>
<dbReference type="Pfam" id="PF00747">
    <property type="entry name" value="Viral_DNA_bp"/>
    <property type="match status" value="1"/>
</dbReference>
<dbReference type="SUPFAM" id="SSF118208">
    <property type="entry name" value="Viral ssDNA binding protein"/>
    <property type="match status" value="1"/>
</dbReference>
<proteinExistence type="inferred from homology"/>
<accession>P28932</accession>
<accession>Q6DLI0</accession>
<comment type="function">
    <text evidence="1">Plays several crucial roles in viral infection. Participates in the opening of the viral DNA origin to initiate replication by interacting with the origin-binding protein. May disrupt loops, hairpins and other secondary structures present on ssDNA to reduce and eliminate pausing of viral DNA polymerase at specific sites during elongation. Promotes viral DNA recombination by performing strand-transfer, characterized by the ability to transfer a DNA strand from a linear duplex to a complementary single-stranded DNA circle. Can also catalyze the renaturation of complementary single strands. Additionally, reorganizes the host cell nucleus, leading to the formation of prereplicative sites and replication compartments. This process is driven by the protein which can form double-helical filaments in the absence of DNA.</text>
</comment>
<comment type="subunit">
    <text evidence="1">Homooligomers. Forms double-helical filaments necessary for the formation of replication compartments within the host nucleus. Interacts with the origin-binding protein. Interacts with the helicase primase complex; this interaction stimulates primer synthesis activity of the helicase-primase complex. Interacts with the DNA polymerase. Interacts with the alkaline exonuclease; this interaction increases its nuclease processivity.</text>
</comment>
<comment type="subcellular location">
    <subcellularLocation>
        <location evidence="1">Host nucleus</location>
    </subcellularLocation>
    <text evidence="1">In the absence of DNA replication, found in the nuclear framework-associated structures (prereplicative sites). As viral DNA replication proceeds, it migrates to globular intranuclear structures (replication compartments).</text>
</comment>
<comment type="similarity">
    <text evidence="1">Belongs to the herpesviridae major DNA-binding protein family.</text>
</comment>
<organismHost>
    <name type="scientific">Equus caballus</name>
    <name type="common">Horse</name>
    <dbReference type="NCBI Taxonomy" id="9796"/>
</organismHost>
<feature type="chain" id="PRO_0000115750" description="Major DNA-binding protein">
    <location>
        <begin position="1"/>
        <end position="1209"/>
    </location>
</feature>
<feature type="zinc finger region" evidence="1">
    <location>
        <begin position="503"/>
        <end position="516"/>
    </location>
</feature>
<feature type="region of interest" description="Disordered" evidence="2">
    <location>
        <begin position="290"/>
        <end position="312"/>
    </location>
</feature>
<feature type="region of interest" description="Required for nuclear localization" evidence="1">
    <location>
        <begin position="1182"/>
        <end position="1209"/>
    </location>
</feature>
<feature type="short sequence motif" description="Required for filament formation" evidence="1">
    <location>
        <begin position="849"/>
        <end position="850"/>
    </location>
</feature>
<sequence length="1209" mass="129983">MESAPKTVSLPVSPLGYVYARQKASLQTGTVSLTAARSVDSDLAVLPVIRGLTVEQTFTTNVAVVAGSKTTGLGGTGITLKLTPSHFNPNAFVFYGGSVIGASSNAPNLTRACEAARRRFGFSAFSSPPVENAVETSGEEICASLNLSPETTALYLVVTESFKEMVYVCNTFLHYGGTSTVTIDGQDAMKIPIYPVQLYMPDVNRLASEPFNAKHRSIGDEFVYSRPFFNSDLCRLLHGYVLGPAAVALRVRNLDGVARGAAHLALDENHEGSVLPQDVTFTLFDSTQGNAGKGSGRAQRQGDGSGSKNSASSGIERRLASVMAADTALSVDSIMGAGIYDTELPSVEDWPVLSSGDDTESLEALGAYAARLSGLVGAMVFSANSVLYMTEVDDGGPADGKDGSNPSYHRFYLIAAPYVAGNPQTDKDGRVLPHTADQQAAPINGSNQEFSLDYLALACGFCPQILARLLFYLERCDAGTFGGRNETDALRYLANTLESDVPCGLCNQATRPACAHTTLHRLRQRLPRFGAPVRAPIGIFGTMNSAYSDCDVLGNYASYGALKRPNDNEAPKSIMQDTYRATMERLVNELEQAKLIDKETLAQASPCSAPTSVVHDQASFIGLLSNIKDTIEGAAEQFMRTLVEARDFKIREGLADANHTMSISLDPYSSSFCPVTSFLARRTVFAVLQDLVLSQCHCLFYGQSVEGRNFRNQFQPVLRRRFLDMLNGGFITAKTVTVTVSDSGVLAPDLTRPASEPPTKDYDGDMARVSMEVLRDLRVKNRVLFSNGGANMSEAARARVAGMASAYRRPDKGSNILNGAVGFLVKQYHGVLFPRGHPPGIDTPNPQWFWTLLQRNQMPARLLSKEDIETITAIKRFSDEYSAINFINLTPNNIGELAQFYFANLVLKYCDHSQYFINGLTAIVVGSRRPRDPAAVLAWIDRTINGAADVEPAAQEVLQRLGSNPAAWTGTFTSTNMVRYVMDQRPMVVIGLSISKYNGSAGNNRVFQAGNWNGLNGGKNVCPLMAFDRTRRFVLACPRVGFTCEAGGFGTGVRENTLSEQVRGIVSEGGPMVQTAVFAAVLHALGARTQHLAVDDWIGLVDDEFLAASLDALNATVVDQFGEWSVEAAQELVKNMEAQTTAGAVAAGEGAFDFGACVGDTPQQSTSAFNGGLAMAAAPAGQKRSLPDDILFDMGAPPEKKSGLTFDML</sequence>
<keyword id="KW-0235">DNA replication</keyword>
<keyword id="KW-0238">DNA-binding</keyword>
<keyword id="KW-1048">Host nucleus</keyword>
<keyword id="KW-0479">Metal-binding</keyword>
<keyword id="KW-1185">Reference proteome</keyword>
<keyword id="KW-0862">Zinc</keyword>
<keyword id="KW-0863">Zinc-finger</keyword>
<gene>
    <name evidence="1" type="primary">DBP</name>
    <name type="ordered locus">31</name>
</gene>